<name>CITE2_MOUSE</name>
<accession>O35740</accession>
<accession>O35741</accession>
<accession>O35742</accession>
<accession>O35743</accession>
<accession>O55198</accession>
<accession>Q6PGA9</accession>
<protein>
    <recommendedName>
        <fullName>Cbp/p300-interacting transactivator 2</fullName>
    </recommendedName>
    <alternativeName>
        <fullName>MSG-related protein 1</fullName>
        <shortName>MRG-1</shortName>
    </alternativeName>
    <alternativeName>
        <fullName>P35srj</fullName>
    </alternativeName>
</protein>
<keyword id="KW-0010">Activator</keyword>
<keyword id="KW-0025">Alternative splicing</keyword>
<keyword id="KW-0217">Developmental protein</keyword>
<keyword id="KW-0221">Differentiation</keyword>
<keyword id="KW-0539">Nucleus</keyword>
<keyword id="KW-1185">Reference proteome</keyword>
<keyword id="KW-0678">Repressor</keyword>
<keyword id="KW-0804">Transcription</keyword>
<keyword id="KW-0805">Transcription regulation</keyword>
<comment type="function">
    <text evidence="3 6 7 8 9 10 11">Transcriptional coactivator of the p300/CBP-mediated transcription complex. Acts as a bridge, linking TFAP2 transcription factors and the p300/CBP transcriptional coactivator complex in order to stimulate TFAP2-mediated transcriptional activation. Positively regulates TGF-beta signaling through its association with the SMAD/p300/CBP-mediated transcriptional coactivator complex. Stimulates the peroxisome proliferator-activated receptors PPARA transcriptional activity. Enhances estrogen-dependent transactivation mediated by estrogen receptors. Also acts as a transcriptional corepressor; interferes with the binding of the transcription factors HIF1A or STAT2 and the p300/CBP transcriptional coactivator complex. Participates in sex determination and early gonad development by stimulating transcription activation of SRY. Plays a role in controlling left-right patterning during embryogenesis; potentiates transcriptional activation of NODAL-mediated gene transcription in the left lateral plate mesoderm (LPM). Plays an essential role in differentiation of the adrenal cortex from the adrenogonadal primordium (AGP); stimulates WT1-mediated transcription activation thereby up-regulating the nuclear hormone receptor NR5A1 promoter activity. Associates with chromatin to the PITX2 P1 promoter region.</text>
</comment>
<comment type="subunit">
    <text evidence="1 3 8 9">Interacts (via C-terminus) with EP300 (via CH1 domain); the interaction is stimulated in response to hypoxia. Interacts with PPARA. Interacts (via C-terminus) with TFAP2A, TFAP2B and TFAP2C (By similarity). Interacts (via C-terminus) with SMAD2. Interacts (via C-terminus) with SMAD3 (via MH2 domain). Interacts with LHX2 (via LIM domains). Interacts with WT1 isoform 1 and isoform 3.</text>
</comment>
<comment type="subcellular location">
    <subcellularLocation>
        <location>Nucleus</location>
    </subcellularLocation>
    <text evidence="1">Colocalizes with EP300 in dot-like structures.</text>
</comment>
<comment type="alternative products">
    <event type="alternative splicing"/>
    <isoform>
        <id>O35740-1</id>
        <name>1</name>
        <sequence type="displayed"/>
    </isoform>
    <isoform>
        <id>O35740-2</id>
        <name>2</name>
        <sequence type="described" ref="VSP_001090"/>
    </isoform>
    <isoform>
        <id>O35740-3</id>
        <name>3</name>
        <sequence type="described" ref="VSP_001091"/>
    </isoform>
    <isoform>
        <id>O35740-4</id>
        <name>4</name>
        <sequence type="described" ref="VSP_001092"/>
    </isoform>
</comment>
<comment type="tissue specificity">
    <text evidence="5">Ubiquitous.</text>
</comment>
<comment type="developmental stage">
    <text evidence="6 7 9 10">Expressed in the embryonic heart. Expressed in the ventral node, cardiac crescent and blood islands at 7.5 dpc. Expressed in the cardiac crescent, anterior lateral mesoderm and in trunk paraxial mesoderm at 8 dpc. Expressed in forebrain-midbrain boundary, branchial arches 1 and 2, heart and somites at 9.5 dpc (at protein level). Expressed in the coelomic epithelium and in cells in the underlying nephrogenic mesenchyme of the genital ridge at 10 dpc. Expressed in the genital ridge and the presumptive adrenal area at 10.5 dpc. Expressed in the gonad and in the adrenal anlagen at 12 dpc. Expressed in the cells of the adrenal cortex at 14 dpc. Expressed throughout the embryonic heart, as well as in the node and the lateral plate mesoderm (LPM), that are responsible for initiating and maintaining left-right patterning. Expressed in the crown cells of the node.</text>
</comment>
<comment type="disruption phenotype">
    <text evidence="4 6 7 9 11">Mice embryos die during gestation with left-right patterning defects and severe developmental abnormalities, including cardiac malformations, exencephaly and adrenal agenesis. Show also impaired mesonephric tubules and adrenal cortex development in embryos.</text>
</comment>
<comment type="similarity">
    <text evidence="14">Belongs to the CITED family.</text>
</comment>
<feature type="chain" id="PRO_0000144727" description="Cbp/p300-interacting transactivator 2">
    <location>
        <begin position="1"/>
        <end position="269"/>
    </location>
</feature>
<feature type="region of interest" description="Disordered" evidence="2">
    <location>
        <begin position="142"/>
        <end position="200"/>
    </location>
</feature>
<feature type="compositionally biased region" description="Gly residues" evidence="2">
    <location>
        <begin position="165"/>
        <end position="198"/>
    </location>
</feature>
<feature type="splice variant" id="VSP_001090" description="In isoform 2." evidence="13">
    <location>
        <begin position="138"/>
        <end position="158"/>
    </location>
</feature>
<feature type="splice variant" id="VSP_001091" description="In isoform 3." evidence="12 13">
    <location>
        <begin position="159"/>
        <end position="213"/>
    </location>
</feature>
<feature type="splice variant" id="VSP_001092" description="In isoform 4." evidence="13">
    <location>
        <begin position="203"/>
        <end position="213"/>
    </location>
</feature>
<feature type="sequence conflict" description="In Ref. 1; CAA75432/CAA75435." evidence="14" ref="1">
    <original>SG</original>
    <variation>TC</variation>
    <location>
        <begin position="194"/>
        <end position="195"/>
    </location>
</feature>
<organism>
    <name type="scientific">Mus musculus</name>
    <name type="common">Mouse</name>
    <dbReference type="NCBI Taxonomy" id="10090"/>
    <lineage>
        <taxon>Eukaryota</taxon>
        <taxon>Metazoa</taxon>
        <taxon>Chordata</taxon>
        <taxon>Craniata</taxon>
        <taxon>Vertebrata</taxon>
        <taxon>Euteleostomi</taxon>
        <taxon>Mammalia</taxon>
        <taxon>Eutheria</taxon>
        <taxon>Euarchontoglires</taxon>
        <taxon>Glires</taxon>
        <taxon>Rodentia</taxon>
        <taxon>Myomorpha</taxon>
        <taxon>Muroidea</taxon>
        <taxon>Muridae</taxon>
        <taxon>Murinae</taxon>
        <taxon>Mus</taxon>
        <taxon>Mus</taxon>
    </lineage>
</organism>
<reference key="1">
    <citation type="journal article" date="1998" name="Mech. Dev.">
        <title>Msg1 and Mrg1, founding members of a gene family, show distinct patterns of gene expression during mouse embryogenesis.</title>
        <authorList>
            <person name="Dunwoodie S.L."/>
            <person name="Rodriguez T.A."/>
            <person name="Beddington R.S.P."/>
        </authorList>
    </citation>
    <scope>NUCLEOTIDE SEQUENCE [MRNA] (ISOFORMS 1; 2; 3 AND 4)</scope>
    <source>
        <strain>C57BL/6 X DBA</strain>
    </source>
</reference>
<reference key="2">
    <citation type="journal article" date="1997" name="Gene">
        <title>MSG1 and its related protein MRG1 share a transcription activating domain.</title>
        <authorList>
            <person name="Shioda T."/>
            <person name="Fenner M.H."/>
            <person name="Isselbacher K.J."/>
        </authorList>
    </citation>
    <scope>NUCLEOTIDE SEQUENCE [MRNA] (ISOFORM 3)</scope>
</reference>
<reference key="3">
    <citation type="journal article" date="2005" name="Science">
        <title>The transcriptional landscape of the mammalian genome.</title>
        <authorList>
            <person name="Carninci P."/>
            <person name="Kasukawa T."/>
            <person name="Katayama S."/>
            <person name="Gough J."/>
            <person name="Frith M.C."/>
            <person name="Maeda N."/>
            <person name="Oyama R."/>
            <person name="Ravasi T."/>
            <person name="Lenhard B."/>
            <person name="Wells C."/>
            <person name="Kodzius R."/>
            <person name="Shimokawa K."/>
            <person name="Bajic V.B."/>
            <person name="Brenner S.E."/>
            <person name="Batalov S."/>
            <person name="Forrest A.R."/>
            <person name="Zavolan M."/>
            <person name="Davis M.J."/>
            <person name="Wilming L.G."/>
            <person name="Aidinis V."/>
            <person name="Allen J.E."/>
            <person name="Ambesi-Impiombato A."/>
            <person name="Apweiler R."/>
            <person name="Aturaliya R.N."/>
            <person name="Bailey T.L."/>
            <person name="Bansal M."/>
            <person name="Baxter L."/>
            <person name="Beisel K.W."/>
            <person name="Bersano T."/>
            <person name="Bono H."/>
            <person name="Chalk A.M."/>
            <person name="Chiu K.P."/>
            <person name="Choudhary V."/>
            <person name="Christoffels A."/>
            <person name="Clutterbuck D.R."/>
            <person name="Crowe M.L."/>
            <person name="Dalla E."/>
            <person name="Dalrymple B.P."/>
            <person name="de Bono B."/>
            <person name="Della Gatta G."/>
            <person name="di Bernardo D."/>
            <person name="Down T."/>
            <person name="Engstrom P."/>
            <person name="Fagiolini M."/>
            <person name="Faulkner G."/>
            <person name="Fletcher C.F."/>
            <person name="Fukushima T."/>
            <person name="Furuno M."/>
            <person name="Futaki S."/>
            <person name="Gariboldi M."/>
            <person name="Georgii-Hemming P."/>
            <person name="Gingeras T.R."/>
            <person name="Gojobori T."/>
            <person name="Green R.E."/>
            <person name="Gustincich S."/>
            <person name="Harbers M."/>
            <person name="Hayashi Y."/>
            <person name="Hensch T.K."/>
            <person name="Hirokawa N."/>
            <person name="Hill D."/>
            <person name="Huminiecki L."/>
            <person name="Iacono M."/>
            <person name="Ikeo K."/>
            <person name="Iwama A."/>
            <person name="Ishikawa T."/>
            <person name="Jakt M."/>
            <person name="Kanapin A."/>
            <person name="Katoh M."/>
            <person name="Kawasawa Y."/>
            <person name="Kelso J."/>
            <person name="Kitamura H."/>
            <person name="Kitano H."/>
            <person name="Kollias G."/>
            <person name="Krishnan S.P."/>
            <person name="Kruger A."/>
            <person name="Kummerfeld S.K."/>
            <person name="Kurochkin I.V."/>
            <person name="Lareau L.F."/>
            <person name="Lazarevic D."/>
            <person name="Lipovich L."/>
            <person name="Liu J."/>
            <person name="Liuni S."/>
            <person name="McWilliam S."/>
            <person name="Madan Babu M."/>
            <person name="Madera M."/>
            <person name="Marchionni L."/>
            <person name="Matsuda H."/>
            <person name="Matsuzawa S."/>
            <person name="Miki H."/>
            <person name="Mignone F."/>
            <person name="Miyake S."/>
            <person name="Morris K."/>
            <person name="Mottagui-Tabar S."/>
            <person name="Mulder N."/>
            <person name="Nakano N."/>
            <person name="Nakauchi H."/>
            <person name="Ng P."/>
            <person name="Nilsson R."/>
            <person name="Nishiguchi S."/>
            <person name="Nishikawa S."/>
            <person name="Nori F."/>
            <person name="Ohara O."/>
            <person name="Okazaki Y."/>
            <person name="Orlando V."/>
            <person name="Pang K.C."/>
            <person name="Pavan W.J."/>
            <person name="Pavesi G."/>
            <person name="Pesole G."/>
            <person name="Petrovsky N."/>
            <person name="Piazza S."/>
            <person name="Reed J."/>
            <person name="Reid J.F."/>
            <person name="Ring B.Z."/>
            <person name="Ringwald M."/>
            <person name="Rost B."/>
            <person name="Ruan Y."/>
            <person name="Salzberg S.L."/>
            <person name="Sandelin A."/>
            <person name="Schneider C."/>
            <person name="Schoenbach C."/>
            <person name="Sekiguchi K."/>
            <person name="Semple C.A."/>
            <person name="Seno S."/>
            <person name="Sessa L."/>
            <person name="Sheng Y."/>
            <person name="Shibata Y."/>
            <person name="Shimada H."/>
            <person name="Shimada K."/>
            <person name="Silva D."/>
            <person name="Sinclair B."/>
            <person name="Sperling S."/>
            <person name="Stupka E."/>
            <person name="Sugiura K."/>
            <person name="Sultana R."/>
            <person name="Takenaka Y."/>
            <person name="Taki K."/>
            <person name="Tammoja K."/>
            <person name="Tan S.L."/>
            <person name="Tang S."/>
            <person name="Taylor M.S."/>
            <person name="Tegner J."/>
            <person name="Teichmann S.A."/>
            <person name="Ueda H.R."/>
            <person name="van Nimwegen E."/>
            <person name="Verardo R."/>
            <person name="Wei C.L."/>
            <person name="Yagi K."/>
            <person name="Yamanishi H."/>
            <person name="Zabarovsky E."/>
            <person name="Zhu S."/>
            <person name="Zimmer A."/>
            <person name="Hide W."/>
            <person name="Bult C."/>
            <person name="Grimmond S.M."/>
            <person name="Teasdale R.D."/>
            <person name="Liu E.T."/>
            <person name="Brusic V."/>
            <person name="Quackenbush J."/>
            <person name="Wahlestedt C."/>
            <person name="Mattick J.S."/>
            <person name="Hume D.A."/>
            <person name="Kai C."/>
            <person name="Sasaki D."/>
            <person name="Tomaru Y."/>
            <person name="Fukuda S."/>
            <person name="Kanamori-Katayama M."/>
            <person name="Suzuki M."/>
            <person name="Aoki J."/>
            <person name="Arakawa T."/>
            <person name="Iida J."/>
            <person name="Imamura K."/>
            <person name="Itoh M."/>
            <person name="Kato T."/>
            <person name="Kawaji H."/>
            <person name="Kawagashira N."/>
            <person name="Kawashima T."/>
            <person name="Kojima M."/>
            <person name="Kondo S."/>
            <person name="Konno H."/>
            <person name="Nakano K."/>
            <person name="Ninomiya N."/>
            <person name="Nishio T."/>
            <person name="Okada M."/>
            <person name="Plessy C."/>
            <person name="Shibata K."/>
            <person name="Shiraki T."/>
            <person name="Suzuki S."/>
            <person name="Tagami M."/>
            <person name="Waki K."/>
            <person name="Watahiki A."/>
            <person name="Okamura-Oho Y."/>
            <person name="Suzuki H."/>
            <person name="Kawai J."/>
            <person name="Hayashizaki Y."/>
        </authorList>
    </citation>
    <scope>NUCLEOTIDE SEQUENCE [LARGE SCALE MRNA]</scope>
    <source>
        <strain>C57BL/6J</strain>
        <tissue>Placenta</tissue>
    </source>
</reference>
<reference key="4">
    <citation type="journal article" date="2009" name="PLoS Biol.">
        <title>Lineage-specific biology revealed by a finished genome assembly of the mouse.</title>
        <authorList>
            <person name="Church D.M."/>
            <person name="Goodstadt L."/>
            <person name="Hillier L.W."/>
            <person name="Zody M.C."/>
            <person name="Goldstein S."/>
            <person name="She X."/>
            <person name="Bult C.J."/>
            <person name="Agarwala R."/>
            <person name="Cherry J.L."/>
            <person name="DiCuccio M."/>
            <person name="Hlavina W."/>
            <person name="Kapustin Y."/>
            <person name="Meric P."/>
            <person name="Maglott D."/>
            <person name="Birtle Z."/>
            <person name="Marques A.C."/>
            <person name="Graves T."/>
            <person name="Zhou S."/>
            <person name="Teague B."/>
            <person name="Potamousis K."/>
            <person name="Churas C."/>
            <person name="Place M."/>
            <person name="Herschleb J."/>
            <person name="Runnheim R."/>
            <person name="Forrest D."/>
            <person name="Amos-Landgraf J."/>
            <person name="Schwartz D.C."/>
            <person name="Cheng Z."/>
            <person name="Lindblad-Toh K."/>
            <person name="Eichler E.E."/>
            <person name="Ponting C.P."/>
        </authorList>
    </citation>
    <scope>NUCLEOTIDE SEQUENCE [LARGE SCALE GENOMIC DNA]</scope>
    <source>
        <strain>C57BL/6J</strain>
    </source>
</reference>
<reference key="5">
    <citation type="submission" date="2005-07" db="EMBL/GenBank/DDBJ databases">
        <authorList>
            <person name="Mural R.J."/>
            <person name="Adams M.D."/>
            <person name="Myers E.W."/>
            <person name="Smith H.O."/>
            <person name="Venter J.C."/>
        </authorList>
    </citation>
    <scope>NUCLEOTIDE SEQUENCE [LARGE SCALE GENOMIC DNA]</scope>
</reference>
<reference key="6">
    <citation type="journal article" date="2004" name="Genome Res.">
        <title>The status, quality, and expansion of the NIH full-length cDNA project: the Mammalian Gene Collection (MGC).</title>
        <authorList>
            <consortium name="The MGC Project Team"/>
        </authorList>
    </citation>
    <scope>NUCLEOTIDE SEQUENCE [LARGE SCALE MRNA]</scope>
    <source>
        <strain>C57BL/6J</strain>
        <tissue>Brain</tissue>
    </source>
</reference>
<reference key="7">
    <citation type="journal article" date="1999" name="J. Biol. Chem.">
        <title>MRG1 binds to the LIM domain of Lhx2 and may function as a coactivator to stimulate glycoprotein hormone alpha-subunit gene expression.</title>
        <authorList>
            <person name="Glenn D.J."/>
            <person name="Maurer R.A."/>
        </authorList>
    </citation>
    <scope>FUNCTION</scope>
    <scope>INTERACTION WITH LHX2</scope>
</reference>
<reference key="8">
    <citation type="journal article" date="2001" name="Nat. Genet.">
        <title>Cardiac malformations, adrenal agenesis, neural crest defects and exencephaly in mice lacking Cited2, a new Tfap2 co-activator.</title>
        <authorList>
            <person name="Bamforth S.D."/>
            <person name="Braganca J."/>
            <person name="Eloranta J.J."/>
            <person name="Murdoch J.N."/>
            <person name="Marques F.I."/>
            <person name="Kranc K.R."/>
            <person name="Farza H."/>
            <person name="Henderson D.J."/>
            <person name="Hurst H.C."/>
            <person name="Bhattacharya S."/>
        </authorList>
    </citation>
    <scope>DISRUPTION PHENOTYPE</scope>
</reference>
<reference key="9">
    <citation type="journal article" date="2004" name="J. Biol. Chem.">
        <title>Identification of the CREB-binding protein/p300-interacting protein CITED2 as a peroxisome proliferator-activated receptor alpha coregulator.</title>
        <authorList>
            <person name="Tien E.S."/>
            <person name="Davis J.W."/>
            <person name="Vanden Heuvel J.P."/>
        </authorList>
    </citation>
    <scope>TISSUE SPECIFICITY</scope>
</reference>
<reference key="10">
    <citation type="journal article" date="2004" name="Nat. Genet.">
        <title>Cited2 controls left-right patterning and heart development through a Nodal-Pitx2c pathway.</title>
        <authorList>
            <person name="Bamforth S.D."/>
            <person name="Braganca J."/>
            <person name="Farthing C.R."/>
            <person name="Schneider J.E."/>
            <person name="Broadbent C."/>
            <person name="Michell A.C."/>
            <person name="Clarke K."/>
            <person name="Neubauer S."/>
            <person name="Norris D."/>
            <person name="Brown N.A."/>
            <person name="Anderson R.H."/>
            <person name="Bhattacharya S."/>
        </authorList>
    </citation>
    <scope>FUNCTION</scope>
    <scope>ASSOCIATION WITH CHROMATIN</scope>
    <scope>DISRUPTION PHENOTYPE</scope>
    <scope>DEVELOPMENTAL STAGE</scope>
</reference>
<reference key="11">
    <citation type="journal article" date="2006" name="Oncogene">
        <title>Cited2 modulates TGF-beta-mediated upregulation of MMP9.</title>
        <authorList>
            <person name="Chou Y.T."/>
            <person name="Wang H."/>
            <person name="Chen Y."/>
            <person name="Danielpour D."/>
            <person name="Yang Y.C."/>
        </authorList>
    </citation>
    <scope>FUNCTION</scope>
    <scope>INTERACTION WITH SMAD2 AND SMAD3</scope>
</reference>
<reference key="12">
    <citation type="journal article" date="2005" name="Development">
        <title>Cited2 is required both for heart morphogenesis and establishment of the left-right axis in mouse development.</title>
        <authorList>
            <person name="Weninger W.J."/>
            <person name="Lopes Floro K."/>
            <person name="Bennett M.B."/>
            <person name="Withington S.L."/>
            <person name="Preis J.I."/>
            <person name="Barbera J.P."/>
            <person name="Mohun T.J."/>
            <person name="Dunwoodie S.L."/>
        </authorList>
    </citation>
    <scope>FUNCTION</scope>
    <scope>DISRUPTION PHENOTYPE</scope>
    <scope>DEVELOPMENTAL STAGE</scope>
</reference>
<reference key="13">
    <citation type="journal article" date="2007" name="Development">
        <title>Adrenal development is initiated by Cited2 and Wt1 through modulation of Sf-1 dosage.</title>
        <authorList>
            <person name="Val P."/>
            <person name="Martinez-Barbera J.P."/>
            <person name="Swain A."/>
        </authorList>
    </citation>
    <scope>FUNCTION</scope>
    <scope>INTERACTION WITH WT1</scope>
    <scope>DISRUPTION PHENOTYPE</scope>
    <scope>DEVELOPMENTAL STAGE</scope>
</reference>
<reference key="14">
    <citation type="journal article" date="2009" name="Hum. Mol. Genet.">
        <title>The transcription co-factor CITED2 functions during sex determination and early gonad development.</title>
        <authorList>
            <person name="Buaas F.W."/>
            <person name="Val P."/>
            <person name="Swain A."/>
        </authorList>
    </citation>
    <scope>FUNCTION</scope>
    <scope>DEVELOPMENTAL STAGE</scope>
</reference>
<reference key="15">
    <citation type="journal article" date="2011" name="Hum. Mol. Genet.">
        <title>Loss of Cited2 causes congenital heart disease by perturbing left-right patterning of the body axis.</title>
        <authorList>
            <person name="Lopes Floro K."/>
            <person name="Artap S.T."/>
            <person name="Preis J.I."/>
            <person name="Fatkin D."/>
            <person name="Chapman G."/>
            <person name="Furtado M.B."/>
            <person name="Harvey R.P."/>
            <person name="Hamada H."/>
            <person name="Sparrow D.B."/>
            <person name="Dunwoodie S.L."/>
        </authorList>
    </citation>
    <scope>FUNCTION</scope>
    <scope>DISRUPTION PHENOTYPE</scope>
</reference>
<proteinExistence type="evidence at protein level"/>
<gene>
    <name type="primary">Cited2</name>
    <name type="synonym">Mrg1</name>
    <name type="synonym">Msg2</name>
</gene>
<dbReference type="EMBL" id="Y15163">
    <property type="protein sequence ID" value="CAA75432.1"/>
    <property type="molecule type" value="mRNA"/>
</dbReference>
<dbReference type="EMBL" id="Y15163">
    <property type="protein sequence ID" value="CAA75433.1"/>
    <property type="molecule type" value="mRNA"/>
</dbReference>
<dbReference type="EMBL" id="Y15163">
    <property type="protein sequence ID" value="CAA75434.1"/>
    <property type="molecule type" value="mRNA"/>
</dbReference>
<dbReference type="EMBL" id="Y15163">
    <property type="protein sequence ID" value="CAA75435.1"/>
    <property type="molecule type" value="mRNA"/>
</dbReference>
<dbReference type="EMBL" id="U86445">
    <property type="protein sequence ID" value="AAC39945.1"/>
    <property type="molecule type" value="mRNA"/>
</dbReference>
<dbReference type="EMBL" id="AK131664">
    <property type="protein sequence ID" value="BAE20751.1"/>
    <property type="molecule type" value="mRNA"/>
</dbReference>
<dbReference type="EMBL" id="AK133791">
    <property type="protein sequence ID" value="BAE21844.1"/>
    <property type="molecule type" value="mRNA"/>
</dbReference>
<dbReference type="EMBL" id="AC105167">
    <property type="status" value="NOT_ANNOTATED_CDS"/>
    <property type="molecule type" value="Genomic_DNA"/>
</dbReference>
<dbReference type="EMBL" id="CH466562">
    <property type="protein sequence ID" value="EDL03481.1"/>
    <property type="molecule type" value="Genomic_DNA"/>
</dbReference>
<dbReference type="EMBL" id="BC057126">
    <property type="protein sequence ID" value="AAH57126.1"/>
    <property type="molecule type" value="mRNA"/>
</dbReference>
<dbReference type="CCDS" id="CCDS23708.1">
    <molecule id="O35740-1"/>
</dbReference>
<dbReference type="RefSeq" id="NP_001415566.1">
    <molecule id="O35740-1"/>
    <property type="nucleotide sequence ID" value="NM_001428637.1"/>
</dbReference>
<dbReference type="RefSeq" id="NP_034958.2">
    <molecule id="O35740-1"/>
    <property type="nucleotide sequence ID" value="NM_010828.3"/>
</dbReference>
<dbReference type="SMR" id="O35740"/>
<dbReference type="BioGRID" id="201524">
    <property type="interactions" value="7"/>
</dbReference>
<dbReference type="FunCoup" id="O35740">
    <property type="interactions" value="1821"/>
</dbReference>
<dbReference type="MINT" id="O35740"/>
<dbReference type="STRING" id="10090.ENSMUSP00000151452"/>
<dbReference type="GlyGen" id="O35740">
    <property type="glycosylation" value="2 sites"/>
</dbReference>
<dbReference type="iPTMnet" id="O35740"/>
<dbReference type="PhosphoSitePlus" id="O35740"/>
<dbReference type="PaxDb" id="10090-ENSMUSP00000038405"/>
<dbReference type="ProteomicsDB" id="283845">
    <molecule id="O35740-1"/>
</dbReference>
<dbReference type="ProteomicsDB" id="283846">
    <molecule id="O35740-2"/>
</dbReference>
<dbReference type="ProteomicsDB" id="283847">
    <molecule id="O35740-3"/>
</dbReference>
<dbReference type="ProteomicsDB" id="283848">
    <molecule id="O35740-4"/>
</dbReference>
<dbReference type="Pumba" id="O35740"/>
<dbReference type="Antibodypedia" id="4252">
    <property type="antibodies" value="275 antibodies from 35 providers"/>
</dbReference>
<dbReference type="DNASU" id="17684"/>
<dbReference type="Ensembl" id="ENSMUST00000038107.9">
    <molecule id="O35740-1"/>
    <property type="protein sequence ID" value="ENSMUSP00000038405.8"/>
    <property type="gene ID" value="ENSMUSG00000039910.11"/>
</dbReference>
<dbReference type="Ensembl" id="ENSMUST00000219558.2">
    <molecule id="O35740-1"/>
    <property type="protein sequence ID" value="ENSMUSP00000151452.2"/>
    <property type="gene ID" value="ENSMUSG00000039910.11"/>
</dbReference>
<dbReference type="GeneID" id="17684"/>
<dbReference type="KEGG" id="mmu:17684"/>
<dbReference type="UCSC" id="uc007elt.2">
    <molecule id="O35740-1"/>
    <property type="organism name" value="mouse"/>
</dbReference>
<dbReference type="AGR" id="MGI:1306784"/>
<dbReference type="CTD" id="10370"/>
<dbReference type="MGI" id="MGI:1306784">
    <property type="gene designation" value="Cited2"/>
</dbReference>
<dbReference type="VEuPathDB" id="HostDB:ENSMUSG00000039910"/>
<dbReference type="eggNOG" id="ENOG502QSRC">
    <property type="taxonomic scope" value="Eukaryota"/>
</dbReference>
<dbReference type="GeneTree" id="ENSGT00530000063624"/>
<dbReference type="HOGENOM" id="CLU_090678_1_0_1"/>
<dbReference type="InParanoid" id="O35740"/>
<dbReference type="OMA" id="MSDHIHY"/>
<dbReference type="OrthoDB" id="10025072at2759"/>
<dbReference type="TreeFam" id="TF331915"/>
<dbReference type="Reactome" id="R-MMU-1234158">
    <property type="pathway name" value="Regulation of gene expression by Hypoxia-inducible Factor"/>
</dbReference>
<dbReference type="Reactome" id="R-MMU-8866907">
    <property type="pathway name" value="Activation of the TFAP2 (AP-2) family of transcription factors"/>
</dbReference>
<dbReference type="BioGRID-ORCS" id="17684">
    <property type="hits" value="11 hits in 79 CRISPR screens"/>
</dbReference>
<dbReference type="ChiTaRS" id="Cited2">
    <property type="organism name" value="mouse"/>
</dbReference>
<dbReference type="PRO" id="PR:O35740"/>
<dbReference type="Proteomes" id="UP000000589">
    <property type="component" value="Chromosome 10"/>
</dbReference>
<dbReference type="RNAct" id="O35740">
    <property type="molecule type" value="protein"/>
</dbReference>
<dbReference type="Bgee" id="ENSMUSG00000039910">
    <property type="expression patterns" value="Expressed in metanephric cortical collecting duct and 296 other cell types or tissues"/>
</dbReference>
<dbReference type="ExpressionAtlas" id="O35740">
    <property type="expression patterns" value="baseline and differential"/>
</dbReference>
<dbReference type="GO" id="GO:0000785">
    <property type="term" value="C:chromatin"/>
    <property type="evidence" value="ECO:0000314"/>
    <property type="project" value="BHF-UCL"/>
</dbReference>
<dbReference type="GO" id="GO:0005737">
    <property type="term" value="C:cytoplasm"/>
    <property type="evidence" value="ECO:0000250"/>
    <property type="project" value="UniProtKB"/>
</dbReference>
<dbReference type="GO" id="GO:0005829">
    <property type="term" value="C:cytosol"/>
    <property type="evidence" value="ECO:0007669"/>
    <property type="project" value="Ensembl"/>
</dbReference>
<dbReference type="GO" id="GO:0005654">
    <property type="term" value="C:nucleoplasm"/>
    <property type="evidence" value="ECO:0007669"/>
    <property type="project" value="Ensembl"/>
</dbReference>
<dbReference type="GO" id="GO:0005634">
    <property type="term" value="C:nucleus"/>
    <property type="evidence" value="ECO:0000314"/>
    <property type="project" value="UniProtKB"/>
</dbReference>
<dbReference type="GO" id="GO:0032991">
    <property type="term" value="C:protein-containing complex"/>
    <property type="evidence" value="ECO:0007669"/>
    <property type="project" value="Ensembl"/>
</dbReference>
<dbReference type="GO" id="GO:0003682">
    <property type="term" value="F:chromatin binding"/>
    <property type="evidence" value="ECO:0000314"/>
    <property type="project" value="UniProtKB"/>
</dbReference>
<dbReference type="GO" id="GO:0035035">
    <property type="term" value="F:histone acetyltransferase binding"/>
    <property type="evidence" value="ECO:0007669"/>
    <property type="project" value="Ensembl"/>
</dbReference>
<dbReference type="GO" id="GO:0050693">
    <property type="term" value="F:LBD domain binding"/>
    <property type="evidence" value="ECO:0007669"/>
    <property type="project" value="Ensembl"/>
</dbReference>
<dbReference type="GO" id="GO:0061629">
    <property type="term" value="F:RNA polymerase II-specific DNA-binding transcription factor binding"/>
    <property type="evidence" value="ECO:0000353"/>
    <property type="project" value="BHF-UCL"/>
</dbReference>
<dbReference type="GO" id="GO:0046332">
    <property type="term" value="F:SMAD binding"/>
    <property type="evidence" value="ECO:0000353"/>
    <property type="project" value="MGI"/>
</dbReference>
<dbReference type="GO" id="GO:0003713">
    <property type="term" value="F:transcription coactivator activity"/>
    <property type="evidence" value="ECO:0000314"/>
    <property type="project" value="UniProtKB"/>
</dbReference>
<dbReference type="GO" id="GO:0003712">
    <property type="term" value="F:transcription coregulator activity"/>
    <property type="evidence" value="ECO:0000304"/>
    <property type="project" value="MGI"/>
</dbReference>
<dbReference type="GO" id="GO:0003714">
    <property type="term" value="F:transcription corepressor activity"/>
    <property type="evidence" value="ECO:0000250"/>
    <property type="project" value="UniProtKB"/>
</dbReference>
<dbReference type="GO" id="GO:0035802">
    <property type="term" value="P:adrenal cortex formation"/>
    <property type="evidence" value="ECO:0000315"/>
    <property type="project" value="UniProtKB"/>
</dbReference>
<dbReference type="GO" id="GO:0030325">
    <property type="term" value="P:adrenal gland development"/>
    <property type="evidence" value="ECO:0000315"/>
    <property type="project" value="MGI"/>
</dbReference>
<dbReference type="GO" id="GO:0001568">
    <property type="term" value="P:blood vessel development"/>
    <property type="evidence" value="ECO:0000315"/>
    <property type="project" value="MGI"/>
</dbReference>
<dbReference type="GO" id="GO:0060349">
    <property type="term" value="P:bone morphogenesis"/>
    <property type="evidence" value="ECO:0000315"/>
    <property type="project" value="MGI"/>
</dbReference>
<dbReference type="GO" id="GO:0061308">
    <property type="term" value="P:cardiac neural crest cell development involved in heart development"/>
    <property type="evidence" value="ECO:0000315"/>
    <property type="project" value="MGI"/>
</dbReference>
<dbReference type="GO" id="GO:0060411">
    <property type="term" value="P:cardiac septum morphogenesis"/>
    <property type="evidence" value="ECO:0000315"/>
    <property type="project" value="MGI"/>
</dbReference>
<dbReference type="GO" id="GO:0008283">
    <property type="term" value="P:cell population proliferation"/>
    <property type="evidence" value="ECO:0000250"/>
    <property type="project" value="UniProtKB"/>
</dbReference>
<dbReference type="GO" id="GO:0071456">
    <property type="term" value="P:cellular response to hypoxia"/>
    <property type="evidence" value="ECO:0007669"/>
    <property type="project" value="Ensembl"/>
</dbReference>
<dbReference type="GO" id="GO:0090398">
    <property type="term" value="P:cellular senescence"/>
    <property type="evidence" value="ECO:0007669"/>
    <property type="project" value="Ensembl"/>
</dbReference>
<dbReference type="GO" id="GO:0007417">
    <property type="term" value="P:central nervous system development"/>
    <property type="evidence" value="ECO:0000315"/>
    <property type="project" value="MGI"/>
</dbReference>
<dbReference type="GO" id="GO:0021602">
    <property type="term" value="P:cranial nerve morphogenesis"/>
    <property type="evidence" value="ECO:0000315"/>
    <property type="project" value="MGI"/>
</dbReference>
<dbReference type="GO" id="GO:0046697">
    <property type="term" value="P:decidualization"/>
    <property type="evidence" value="ECO:0000315"/>
    <property type="project" value="MGI"/>
</dbReference>
<dbReference type="GO" id="GO:0061371">
    <property type="term" value="P:determination of heart left/right asymmetry"/>
    <property type="evidence" value="ECO:0000315"/>
    <property type="project" value="MGI"/>
</dbReference>
<dbReference type="GO" id="GO:0003140">
    <property type="term" value="P:determination of left/right asymmetry in lateral mesoderm"/>
    <property type="evidence" value="ECO:0000315"/>
    <property type="project" value="BHF-UCL"/>
</dbReference>
<dbReference type="GO" id="GO:0007368">
    <property type="term" value="P:determination of left/right symmetry"/>
    <property type="evidence" value="ECO:0000315"/>
    <property type="project" value="UniProtKB"/>
</dbReference>
<dbReference type="GO" id="GO:0048596">
    <property type="term" value="P:embryonic camera-type eye morphogenesis"/>
    <property type="evidence" value="ECO:0000316"/>
    <property type="project" value="MGI"/>
</dbReference>
<dbReference type="GO" id="GO:0060971">
    <property type="term" value="P:embryonic heart tube left/right pattern formation"/>
    <property type="evidence" value="ECO:0000315"/>
    <property type="project" value="BHF-UCL"/>
</dbReference>
<dbReference type="GO" id="GO:0001892">
    <property type="term" value="P:embryonic placenta development"/>
    <property type="evidence" value="ECO:0000315"/>
    <property type="project" value="MGI"/>
</dbReference>
<dbReference type="GO" id="GO:0060136">
    <property type="term" value="P:embryonic process involved in female pregnancy"/>
    <property type="evidence" value="ECO:0000315"/>
    <property type="project" value="MGI"/>
</dbReference>
<dbReference type="GO" id="GO:0003197">
    <property type="term" value="P:endocardial cushion development"/>
    <property type="evidence" value="ECO:0000315"/>
    <property type="project" value="MGI"/>
</dbReference>
<dbReference type="GO" id="GO:0048821">
    <property type="term" value="P:erythrocyte development"/>
    <property type="evidence" value="ECO:0000315"/>
    <property type="project" value="MGI"/>
</dbReference>
<dbReference type="GO" id="GO:0030851">
    <property type="term" value="P:granulocyte differentiation"/>
    <property type="evidence" value="ECO:0000315"/>
    <property type="project" value="MGI"/>
</dbReference>
<dbReference type="GO" id="GO:0007507">
    <property type="term" value="P:heart development"/>
    <property type="evidence" value="ECO:0000315"/>
    <property type="project" value="UniProtKB"/>
</dbReference>
<dbReference type="GO" id="GO:0001947">
    <property type="term" value="P:heart looping"/>
    <property type="evidence" value="ECO:0000315"/>
    <property type="project" value="MGI"/>
</dbReference>
<dbReference type="GO" id="GO:0002244">
    <property type="term" value="P:hematopoietic progenitor cell differentiation"/>
    <property type="evidence" value="ECO:0000315"/>
    <property type="project" value="MGI"/>
</dbReference>
<dbReference type="GO" id="GO:0001701">
    <property type="term" value="P:in utero embryonic development"/>
    <property type="evidence" value="ECO:0000315"/>
    <property type="project" value="MGI"/>
</dbReference>
<dbReference type="GO" id="GO:0070986">
    <property type="term" value="P:left/right axis specification"/>
    <property type="evidence" value="ECO:0000315"/>
    <property type="project" value="BHF-UCL"/>
</dbReference>
<dbReference type="GO" id="GO:0002089">
    <property type="term" value="P:lens morphogenesis in camera-type eye"/>
    <property type="evidence" value="ECO:0000315"/>
    <property type="project" value="MGI"/>
</dbReference>
<dbReference type="GO" id="GO:0002521">
    <property type="term" value="P:leukocyte differentiation"/>
    <property type="evidence" value="ECO:0000315"/>
    <property type="project" value="MGI"/>
</dbReference>
<dbReference type="GO" id="GO:0001889">
    <property type="term" value="P:liver development"/>
    <property type="evidence" value="ECO:0000315"/>
    <property type="project" value="BHF-UCL"/>
</dbReference>
<dbReference type="GO" id="GO:0008584">
    <property type="term" value="P:male gonad development"/>
    <property type="evidence" value="ECO:0000316"/>
    <property type="project" value="MGI"/>
</dbReference>
<dbReference type="GO" id="GO:0043066">
    <property type="term" value="P:negative regulation of apoptotic process"/>
    <property type="evidence" value="ECO:0000315"/>
    <property type="project" value="BHF-UCL"/>
</dbReference>
<dbReference type="GO" id="GO:0030336">
    <property type="term" value="P:negative regulation of cell migration"/>
    <property type="evidence" value="ECO:0007669"/>
    <property type="project" value="Ensembl"/>
</dbReference>
<dbReference type="GO" id="GO:0045892">
    <property type="term" value="P:negative regulation of DNA-templated transcription"/>
    <property type="evidence" value="ECO:0000250"/>
    <property type="project" value="UniProtKB"/>
</dbReference>
<dbReference type="GO" id="GO:0010629">
    <property type="term" value="P:negative regulation of gene expression"/>
    <property type="evidence" value="ECO:0000250"/>
    <property type="project" value="UniProtKB"/>
</dbReference>
<dbReference type="GO" id="GO:0000122">
    <property type="term" value="P:negative regulation of transcription by RNA polymerase II"/>
    <property type="evidence" value="ECO:0007669"/>
    <property type="project" value="Ensembl"/>
</dbReference>
<dbReference type="GO" id="GO:0001843">
    <property type="term" value="P:neural tube closure"/>
    <property type="evidence" value="ECO:0000315"/>
    <property type="project" value="MGI"/>
</dbReference>
<dbReference type="GO" id="GO:0001841">
    <property type="term" value="P:neural tube formation"/>
    <property type="evidence" value="ECO:0000315"/>
    <property type="project" value="MGI"/>
</dbReference>
<dbReference type="GO" id="GO:0038092">
    <property type="term" value="P:nodal signaling pathway"/>
    <property type="evidence" value="ECO:0000315"/>
    <property type="project" value="BHF-UCL"/>
</dbReference>
<dbReference type="GO" id="GO:0003151">
    <property type="term" value="P:outflow tract morphogenesis"/>
    <property type="evidence" value="ECO:0000315"/>
    <property type="project" value="BHF-UCL"/>
</dbReference>
<dbReference type="GO" id="GO:0007422">
    <property type="term" value="P:peripheral nervous system development"/>
    <property type="evidence" value="ECO:0000315"/>
    <property type="project" value="MGI"/>
</dbReference>
<dbReference type="GO" id="GO:0045787">
    <property type="term" value="P:positive regulation of cell cycle"/>
    <property type="evidence" value="ECO:0000315"/>
    <property type="project" value="UniProtKB"/>
</dbReference>
<dbReference type="GO" id="GO:0022409">
    <property type="term" value="P:positive regulation of cell-cell adhesion"/>
    <property type="evidence" value="ECO:0000315"/>
    <property type="project" value="BHF-UCL"/>
</dbReference>
<dbReference type="GO" id="GO:0045893">
    <property type="term" value="P:positive regulation of DNA-templated transcription"/>
    <property type="evidence" value="ECO:0000314"/>
    <property type="project" value="UniProtKB"/>
</dbReference>
<dbReference type="GO" id="GO:0010628">
    <property type="term" value="P:positive regulation of gene expression"/>
    <property type="evidence" value="ECO:0000250"/>
    <property type="project" value="UniProtKB"/>
</dbReference>
<dbReference type="GO" id="GO:2000020">
    <property type="term" value="P:positive regulation of male gonad development"/>
    <property type="evidence" value="ECO:0000315"/>
    <property type="project" value="UniProtKB"/>
</dbReference>
<dbReference type="GO" id="GO:0035360">
    <property type="term" value="P:positive regulation of peroxisome proliferator activated receptor signaling pathway"/>
    <property type="evidence" value="ECO:0000250"/>
    <property type="project" value="UniProtKB"/>
</dbReference>
<dbReference type="GO" id="GO:0045944">
    <property type="term" value="P:positive regulation of transcription by RNA polymerase II"/>
    <property type="evidence" value="ECO:0000315"/>
    <property type="project" value="BHF-UCL"/>
</dbReference>
<dbReference type="GO" id="GO:0030511">
    <property type="term" value="P:positive regulation of transforming growth factor beta receptor signaling pathway"/>
    <property type="evidence" value="ECO:0000314"/>
    <property type="project" value="UniProtKB"/>
</dbReference>
<dbReference type="GO" id="GO:0061156">
    <property type="term" value="P:pulmonary artery morphogenesis"/>
    <property type="evidence" value="ECO:0000315"/>
    <property type="project" value="MGI"/>
</dbReference>
<dbReference type="GO" id="GO:0003156">
    <property type="term" value="P:regulation of animal organ formation"/>
    <property type="evidence" value="ECO:0000315"/>
    <property type="project" value="UniProtKB"/>
</dbReference>
<dbReference type="GO" id="GO:0006355">
    <property type="term" value="P:regulation of DNA-templated transcription"/>
    <property type="evidence" value="ECO:0000304"/>
    <property type="project" value="MGI"/>
</dbReference>
<dbReference type="GO" id="GO:0006357">
    <property type="term" value="P:regulation of transcription by RNA polymerase II"/>
    <property type="evidence" value="ECO:0000314"/>
    <property type="project" value="MGI"/>
</dbReference>
<dbReference type="GO" id="GO:0043627">
    <property type="term" value="P:response to estrogen"/>
    <property type="evidence" value="ECO:0000250"/>
    <property type="project" value="UniProtKB"/>
</dbReference>
<dbReference type="GO" id="GO:0034405">
    <property type="term" value="P:response to fluid shear stress"/>
    <property type="evidence" value="ECO:0007669"/>
    <property type="project" value="Ensembl"/>
</dbReference>
<dbReference type="GO" id="GO:0001666">
    <property type="term" value="P:response to hypoxia"/>
    <property type="evidence" value="ECO:0000250"/>
    <property type="project" value="UniProtKB"/>
</dbReference>
<dbReference type="GO" id="GO:0009612">
    <property type="term" value="P:response to mechanical stimulus"/>
    <property type="evidence" value="ECO:0007669"/>
    <property type="project" value="Ensembl"/>
</dbReference>
<dbReference type="GO" id="GO:0007530">
    <property type="term" value="P:sex determination"/>
    <property type="evidence" value="ECO:0000315"/>
    <property type="project" value="UniProtKB"/>
</dbReference>
<dbReference type="GO" id="GO:0035914">
    <property type="term" value="P:skeletal muscle cell differentiation"/>
    <property type="evidence" value="ECO:0000315"/>
    <property type="project" value="MGI"/>
</dbReference>
<dbReference type="GO" id="GO:0048536">
    <property type="term" value="P:spleen development"/>
    <property type="evidence" value="ECO:0000315"/>
    <property type="project" value="BHF-UCL"/>
</dbReference>
<dbReference type="GO" id="GO:0048538">
    <property type="term" value="P:thymus development"/>
    <property type="evidence" value="ECO:0000315"/>
    <property type="project" value="MGI"/>
</dbReference>
<dbReference type="GO" id="GO:0007179">
    <property type="term" value="P:transforming growth factor beta receptor signaling pathway"/>
    <property type="evidence" value="ECO:0000314"/>
    <property type="project" value="MGI"/>
</dbReference>
<dbReference type="GO" id="GO:0001829">
    <property type="term" value="P:trophectodermal cell differentiation"/>
    <property type="evidence" value="ECO:0000315"/>
    <property type="project" value="MGI"/>
</dbReference>
<dbReference type="GO" id="GO:0060065">
    <property type="term" value="P:uterus development"/>
    <property type="evidence" value="ECO:0000315"/>
    <property type="project" value="MGI"/>
</dbReference>
<dbReference type="GO" id="GO:0001944">
    <property type="term" value="P:vasculature development"/>
    <property type="evidence" value="ECO:0000315"/>
    <property type="project" value="MGI"/>
</dbReference>
<dbReference type="GO" id="GO:0001570">
    <property type="term" value="P:vasculogenesis"/>
    <property type="evidence" value="ECO:0000315"/>
    <property type="project" value="MGI"/>
</dbReference>
<dbReference type="GO" id="GO:0003281">
    <property type="term" value="P:ventricular septum development"/>
    <property type="evidence" value="ECO:0000315"/>
    <property type="project" value="MGI"/>
</dbReference>
<dbReference type="GO" id="GO:0060412">
    <property type="term" value="P:ventricular septum morphogenesis"/>
    <property type="evidence" value="ECO:0000315"/>
    <property type="project" value="BHF-UCL"/>
</dbReference>
<dbReference type="FunFam" id="6.10.140.2200:FF:000001">
    <property type="entry name" value="Cbp/p300-interacting transactivator 2 isoform 1"/>
    <property type="match status" value="1"/>
</dbReference>
<dbReference type="Gene3D" id="6.10.140.2200">
    <property type="match status" value="1"/>
</dbReference>
<dbReference type="InterPro" id="IPR007576">
    <property type="entry name" value="CITED"/>
</dbReference>
<dbReference type="PANTHER" id="PTHR17045:SF7">
    <property type="entry name" value="CBP_P300-INTERACTING TRANSACTIVATOR 2"/>
    <property type="match status" value="1"/>
</dbReference>
<dbReference type="PANTHER" id="PTHR17045">
    <property type="entry name" value="MELANOCYTE SPECIFIC GENE RELATED CITED"/>
    <property type="match status" value="1"/>
</dbReference>
<dbReference type="Pfam" id="PF04487">
    <property type="entry name" value="CITED"/>
    <property type="match status" value="1"/>
</dbReference>
<evidence type="ECO:0000250" key="1"/>
<evidence type="ECO:0000256" key="2">
    <source>
        <dbReference type="SAM" id="MobiDB-lite"/>
    </source>
</evidence>
<evidence type="ECO:0000269" key="3">
    <source>
    </source>
</evidence>
<evidence type="ECO:0000269" key="4">
    <source>
    </source>
</evidence>
<evidence type="ECO:0000269" key="5">
    <source>
    </source>
</evidence>
<evidence type="ECO:0000269" key="6">
    <source>
    </source>
</evidence>
<evidence type="ECO:0000269" key="7">
    <source>
    </source>
</evidence>
<evidence type="ECO:0000269" key="8">
    <source>
    </source>
</evidence>
<evidence type="ECO:0000269" key="9">
    <source>
    </source>
</evidence>
<evidence type="ECO:0000269" key="10">
    <source>
    </source>
</evidence>
<evidence type="ECO:0000269" key="11">
    <source>
    </source>
</evidence>
<evidence type="ECO:0000303" key="12">
    <source>
    </source>
</evidence>
<evidence type="ECO:0000303" key="13">
    <source>
    </source>
</evidence>
<evidence type="ECO:0000305" key="14"/>
<sequence>MADHMMAMNHGRFPDGTNGLHHHPAHRMGMGQFPSPHHHQQQQPQHAFNALMGEHIHYGAGNMNATSGIRHAMGPGTVNGGHPPSALAPAARFNNSQFMGPPVASQGGSLPASMQLQKLNNQYFNHHPYPHNHYMPDLHPTAGHQMNGTNQHFRDCNPKHSGGSSTPGGAGGSGTPGGSGGTSGGAGGSSAGGSGGGSTMPASVAHVPAAMLPPNVIDTDFIDEEVLMSLVIEMGLDRIKELPELWLGQNEFDFMTDFVCKQQPSRVSC</sequence>